<dbReference type="EC" id="2.3.1.74"/>
<dbReference type="EMBL" id="X92547">
    <property type="protein sequence ID" value="CAA63305.1"/>
    <property type="molecule type" value="mRNA"/>
</dbReference>
<dbReference type="SMR" id="P53415"/>
<dbReference type="UniPathway" id="UPA00154"/>
<dbReference type="GO" id="GO:0016210">
    <property type="term" value="F:naringenin-chalcone synthase activity"/>
    <property type="evidence" value="ECO:0007669"/>
    <property type="project" value="UniProtKB-EC"/>
</dbReference>
<dbReference type="GO" id="GO:0009813">
    <property type="term" value="P:flavonoid biosynthetic process"/>
    <property type="evidence" value="ECO:0007669"/>
    <property type="project" value="UniProtKB-UniPathway"/>
</dbReference>
<dbReference type="GO" id="GO:0030639">
    <property type="term" value="P:polyketide biosynthetic process"/>
    <property type="evidence" value="ECO:0007669"/>
    <property type="project" value="TreeGrafter"/>
</dbReference>
<dbReference type="CDD" id="cd00831">
    <property type="entry name" value="CHS_like"/>
    <property type="match status" value="1"/>
</dbReference>
<dbReference type="FunFam" id="3.40.47.10:FF:000014">
    <property type="entry name" value="Chalcone synthase 1"/>
    <property type="match status" value="1"/>
</dbReference>
<dbReference type="FunFam" id="3.40.47.10:FF:000025">
    <property type="entry name" value="Chalcone synthase 2"/>
    <property type="match status" value="1"/>
</dbReference>
<dbReference type="Gene3D" id="3.40.47.10">
    <property type="match status" value="2"/>
</dbReference>
<dbReference type="InterPro" id="IPR012328">
    <property type="entry name" value="Chalcone/stilbene_synt_C"/>
</dbReference>
<dbReference type="InterPro" id="IPR001099">
    <property type="entry name" value="Chalcone/stilbene_synt_N"/>
</dbReference>
<dbReference type="InterPro" id="IPR018088">
    <property type="entry name" value="Chalcone/stilbene_synthase_AS"/>
</dbReference>
<dbReference type="InterPro" id="IPR011141">
    <property type="entry name" value="Polyketide_synthase_type-III"/>
</dbReference>
<dbReference type="InterPro" id="IPR016039">
    <property type="entry name" value="Thiolase-like"/>
</dbReference>
<dbReference type="PANTHER" id="PTHR11877:SF14">
    <property type="entry name" value="CHALCONE SYNTHASE"/>
    <property type="match status" value="1"/>
</dbReference>
<dbReference type="PANTHER" id="PTHR11877">
    <property type="entry name" value="HYDROXYMETHYLGLUTARYL-COA SYNTHASE"/>
    <property type="match status" value="1"/>
</dbReference>
<dbReference type="Pfam" id="PF02797">
    <property type="entry name" value="Chal_sti_synt_C"/>
    <property type="match status" value="1"/>
</dbReference>
<dbReference type="Pfam" id="PF00195">
    <property type="entry name" value="Chal_sti_synt_N"/>
    <property type="match status" value="1"/>
</dbReference>
<dbReference type="PIRSF" id="PIRSF000451">
    <property type="entry name" value="PKS_III"/>
    <property type="match status" value="1"/>
</dbReference>
<dbReference type="SUPFAM" id="SSF53901">
    <property type="entry name" value="Thiolase-like"/>
    <property type="match status" value="2"/>
</dbReference>
<dbReference type="PROSITE" id="PS00441">
    <property type="entry name" value="CHALCONE_SYNTH"/>
    <property type="match status" value="1"/>
</dbReference>
<proteinExistence type="evidence at transcript level"/>
<evidence type="ECO:0000255" key="1">
    <source>
        <dbReference type="PROSITE-ProRule" id="PRU10023"/>
    </source>
</evidence>
<evidence type="ECO:0000305" key="2"/>
<gene>
    <name type="primary">CHS2</name>
</gene>
<reference key="1">
    <citation type="journal article" date="1996" name="Bot. Acta">
        <title>Expression of chalcone synthase genes in coleoptiles and primary leaves of Secale cereale L. after induction by UV radiation: evidence for a UV-protective role of the coleoptile.</title>
        <authorList>
            <person name="Haussuehl K.K."/>
            <person name="Rohde W."/>
            <person name="Weissenboeck G."/>
        </authorList>
    </citation>
    <scope>NUCLEOTIDE SEQUENCE [MRNA]</scope>
    <source>
        <strain>cv. Kustro</strain>
    </source>
</reference>
<protein>
    <recommendedName>
        <fullName>Chalcone synthase 2</fullName>
        <ecNumber>2.3.1.74</ecNumber>
    </recommendedName>
    <alternativeName>
        <fullName>Naringenin-chalcone synthase 2</fullName>
    </alternativeName>
</protein>
<name>CHS2_SECCE</name>
<organism>
    <name type="scientific">Secale cereale</name>
    <name type="common">Rye</name>
    <dbReference type="NCBI Taxonomy" id="4550"/>
    <lineage>
        <taxon>Eukaryota</taxon>
        <taxon>Viridiplantae</taxon>
        <taxon>Streptophyta</taxon>
        <taxon>Embryophyta</taxon>
        <taxon>Tracheophyta</taxon>
        <taxon>Spermatophyta</taxon>
        <taxon>Magnoliopsida</taxon>
        <taxon>Liliopsida</taxon>
        <taxon>Poales</taxon>
        <taxon>Poaceae</taxon>
        <taxon>BOP clade</taxon>
        <taxon>Pooideae</taxon>
        <taxon>Triticodae</taxon>
        <taxon>Triticeae</taxon>
        <taxon>Hordeinae</taxon>
        <taxon>Secale</taxon>
    </lineage>
</organism>
<keyword id="KW-0012">Acyltransferase</keyword>
<keyword id="KW-0284">Flavonoid biosynthesis</keyword>
<keyword id="KW-0808">Transferase</keyword>
<accession>P53415</accession>
<comment type="function">
    <text>The primary product of this enzyme is 4,2',4',6'-tetrahydroxychalcone (also termed naringenin-chalcone or chalcone) which can under specific conditions spontaneously isomerize into naringenin.</text>
</comment>
<comment type="catalytic activity">
    <reaction evidence="1">
        <text>(E)-4-coumaroyl-CoA + 3 malonyl-CoA + 3 H(+) = 2',4,4',6'-tetrahydroxychalcone + 3 CO2 + 4 CoA</text>
        <dbReference type="Rhea" id="RHEA:11128"/>
        <dbReference type="ChEBI" id="CHEBI:15378"/>
        <dbReference type="ChEBI" id="CHEBI:15413"/>
        <dbReference type="ChEBI" id="CHEBI:16526"/>
        <dbReference type="ChEBI" id="CHEBI:57287"/>
        <dbReference type="ChEBI" id="CHEBI:57384"/>
        <dbReference type="ChEBI" id="CHEBI:85008"/>
        <dbReference type="EC" id="2.3.1.74"/>
    </reaction>
</comment>
<comment type="pathway">
    <text>Secondary metabolite biosynthesis; flavonoid biosynthesis.</text>
</comment>
<comment type="similarity">
    <text evidence="2">Belongs to the thiolase-like superfamily. Chalcone/stilbene synthases family.</text>
</comment>
<sequence length="394" mass="43224">MAATMTVEEVRKAQRAEGPATVLAIGTATPANCVYQADYPDYYFKITKSDHMADLKEKFKRMCDKSQIRKRYMHLTEEILQDNPNMCAYMAPSLDARQDIVVVEVPKLGKAAAQKAIKEWGQPRSKITHLVFCTTSGVDMPGADYQLTKMLGLRPSVKRLMMYQQGCFAGGTVLRLAKDLAENNRGARVLVVCSEITAVTFRGPHESHLDSLVGQALFGDGAAAVIIGADPDESIERPLFQLVSASQTILPDSEGAIDGHLREVGLTFHLLKDVPGLISKNIERALEDAFKPLGIDDWNSVFWIAHPGGPAILDMVEAKVNLNKERMRATRHVLSEYGNMSSACVLFIMDEMRKRSAEDGHTTTGEGMDWGVLFGFGPGLTVETVVLHSVPVTA</sequence>
<feature type="chain" id="PRO_0000216049" description="Chalcone synthase 2">
    <location>
        <begin position="1"/>
        <end position="394"/>
    </location>
</feature>
<feature type="active site" evidence="1">
    <location>
        <position position="167"/>
    </location>
</feature>